<protein>
    <recommendedName>
        <fullName evidence="6">Zinc finger protein ZAT2</fullName>
    </recommendedName>
    <alternativeName>
        <fullName evidence="5">Protein DUO1-ACTIVATED ZINC FINGER 1</fullName>
    </alternativeName>
</protein>
<accession>Q9SIJ0</accession>
<reference key="1">
    <citation type="journal article" date="1999" name="Nature">
        <title>Sequence and analysis of chromosome 2 of the plant Arabidopsis thaliana.</title>
        <authorList>
            <person name="Lin X."/>
            <person name="Kaul S."/>
            <person name="Rounsley S.D."/>
            <person name="Shea T.P."/>
            <person name="Benito M.-I."/>
            <person name="Town C.D."/>
            <person name="Fujii C.Y."/>
            <person name="Mason T.M."/>
            <person name="Bowman C.L."/>
            <person name="Barnstead M.E."/>
            <person name="Feldblyum T.V."/>
            <person name="Buell C.R."/>
            <person name="Ketchum K.A."/>
            <person name="Lee J.J."/>
            <person name="Ronning C.M."/>
            <person name="Koo H.L."/>
            <person name="Moffat K.S."/>
            <person name="Cronin L.A."/>
            <person name="Shen M."/>
            <person name="Pai G."/>
            <person name="Van Aken S."/>
            <person name="Umayam L."/>
            <person name="Tallon L.J."/>
            <person name="Gill J.E."/>
            <person name="Adams M.D."/>
            <person name="Carrera A.J."/>
            <person name="Creasy T.H."/>
            <person name="Goodman H.M."/>
            <person name="Somerville C.R."/>
            <person name="Copenhaver G.P."/>
            <person name="Preuss D."/>
            <person name="Nierman W.C."/>
            <person name="White O."/>
            <person name="Eisen J.A."/>
            <person name="Salzberg S.L."/>
            <person name="Fraser C.M."/>
            <person name="Venter J.C."/>
        </authorList>
    </citation>
    <scope>NUCLEOTIDE SEQUENCE [LARGE SCALE GENOMIC DNA]</scope>
    <source>
        <strain>cv. Columbia</strain>
    </source>
</reference>
<reference key="2">
    <citation type="journal article" date="2017" name="Plant J.">
        <title>Araport11: a complete reannotation of the Arabidopsis thaliana reference genome.</title>
        <authorList>
            <person name="Cheng C.Y."/>
            <person name="Krishnakumar V."/>
            <person name="Chan A.P."/>
            <person name="Thibaud-Nissen F."/>
            <person name="Schobel S."/>
            <person name="Town C.D."/>
        </authorList>
    </citation>
    <scope>GENOME REANNOTATION</scope>
    <source>
        <strain>cv. Columbia</strain>
    </source>
</reference>
<reference key="3">
    <citation type="submission" date="2005-06" db="EMBL/GenBank/DDBJ databases">
        <authorList>
            <person name="Underwood B.A."/>
            <person name="Xiao Y.-L."/>
            <person name="Moskal W.A. Jr."/>
            <person name="Monaghan E.L."/>
            <person name="Wang W."/>
            <person name="Redman J.C."/>
            <person name="Wu H.C."/>
            <person name="Utterback T."/>
            <person name="Town C.D."/>
        </authorList>
    </citation>
    <scope>NUCLEOTIDE SEQUENCE [LARGE SCALE MRNA]</scope>
    <source>
        <strain>cv. Columbia</strain>
    </source>
</reference>
<reference key="4">
    <citation type="submission" date="2009-03" db="EMBL/GenBank/DDBJ databases">
        <title>ORF cloning and analysis of Arabidopsis transcription factor genes.</title>
        <authorList>
            <person name="Fujita M."/>
            <person name="Mizukado S."/>
            <person name="Seki M."/>
            <person name="Shinozaki K."/>
            <person name="Mitsuda N."/>
            <person name="Takiguchi Y."/>
            <person name="Takagi M."/>
        </authorList>
    </citation>
    <scope>NUCLEOTIDE SEQUENCE [LARGE SCALE GENOMIC DNA]</scope>
</reference>
<reference key="5">
    <citation type="journal article" date="2011" name="Plant Cell">
        <title>The R2R3 MYB transcription factor DUO1 activates a male germline-specific regulon essential for sperm cell differentiation in Arabidopsis.</title>
        <authorList>
            <person name="Borg M."/>
            <person name="Brownfield L."/>
            <person name="Khatab H."/>
            <person name="Sidorova A."/>
            <person name="Lingaya M."/>
            <person name="Twell D."/>
        </authorList>
    </citation>
    <scope>INDUCTION</scope>
</reference>
<reference key="6">
    <citation type="journal article" date="2014" name="Plant Cell">
        <title>An EAR-dependent regulatory module promotes male germ cell division and sperm fertility in Arabidopsis.</title>
        <authorList>
            <person name="Borg M."/>
            <person name="Rutley N."/>
            <person name="Kagale S."/>
            <person name="Hamamura Y."/>
            <person name="Gherghinoiu M."/>
            <person name="Kumar S."/>
            <person name="Sari U."/>
            <person name="Esparza-Franco M.A."/>
            <person name="Sakamoto W."/>
            <person name="Rozwadowski K."/>
            <person name="Higashiyama T."/>
            <person name="Twell D."/>
        </authorList>
    </citation>
    <scope>FUNCTION</scope>
    <scope>INTERACTION WITH TPL</scope>
    <scope>SUBCELLULAR LOCATION</scope>
    <scope>DEVELOPMENTAL STAGE</scope>
    <scope>TISSUE SPECIFICITY</scope>
</reference>
<organism>
    <name type="scientific">Arabidopsis thaliana</name>
    <name type="common">Mouse-ear cress</name>
    <dbReference type="NCBI Taxonomy" id="3702"/>
    <lineage>
        <taxon>Eukaryota</taxon>
        <taxon>Viridiplantae</taxon>
        <taxon>Streptophyta</taxon>
        <taxon>Embryophyta</taxon>
        <taxon>Tracheophyta</taxon>
        <taxon>Spermatophyta</taxon>
        <taxon>Magnoliopsida</taxon>
        <taxon>eudicotyledons</taxon>
        <taxon>Gunneridae</taxon>
        <taxon>Pentapetalae</taxon>
        <taxon>rosids</taxon>
        <taxon>malvids</taxon>
        <taxon>Brassicales</taxon>
        <taxon>Brassicaceae</taxon>
        <taxon>Camelineae</taxon>
        <taxon>Arabidopsis</taxon>
    </lineage>
</organism>
<comment type="function">
    <text evidence="4">Mediates the regulation of male germ cell division by DUO1.</text>
</comment>
<comment type="subunit">
    <text evidence="4">Interacts (via the EAR motif) with TPL.</text>
</comment>
<comment type="subcellular location">
    <subcellularLocation>
        <location evidence="4">Nucleus</location>
    </subcellularLocation>
</comment>
<comment type="tissue specificity">
    <text evidence="4">Expressed exclusively in pollen.</text>
</comment>
<comment type="developmental stage">
    <text evidence="4">Expressed in the germ cells following microspore division, increases during development and persists into mature pollen.</text>
</comment>
<comment type="induction">
    <text evidence="3">Activated by the transcription factor DUO1.</text>
</comment>
<sequence length="270" mass="29556">MSNTSNSDPNSDIPFASSNVTLPSYNQNPRRKRTKLTNNEVGSSSSSPRPKPVTQPDPDASQIARPCTECGKQFGSLKALFGHMRCHPERQWRGINPPSNFKRRINSNAASSSSSWDPSEEEHNIASCLLMMANGDVPTRSSEVEERFECDGCKKVFGSHQALGGHRATHKDVKGCFANKNITEDPPPPPPQEIVDQDKGKSVKLVSGMNHRCNICSRVFSSGQALGGHMRCHWEKDQEENQVRGIDLNVPAATSSDTTLGCSLDLRLGL</sequence>
<proteinExistence type="evidence at protein level"/>
<feature type="chain" id="PRO_0000409711" description="Zinc finger protein ZAT2">
    <location>
        <begin position="1"/>
        <end position="270"/>
    </location>
</feature>
<feature type="zinc finger region" description="C2H2-type 1" evidence="1">
    <location>
        <begin position="65"/>
        <end position="87"/>
    </location>
</feature>
<feature type="zinc finger region" description="C2H2-type 2" evidence="1">
    <location>
        <begin position="148"/>
        <end position="170"/>
    </location>
</feature>
<feature type="zinc finger region" description="C2H2-type 3" evidence="1">
    <location>
        <begin position="211"/>
        <end position="233"/>
    </location>
</feature>
<feature type="region of interest" description="Disordered" evidence="2">
    <location>
        <begin position="1"/>
        <end position="64"/>
    </location>
</feature>
<feature type="region of interest" description="Disordered" evidence="2">
    <location>
        <begin position="95"/>
        <end position="119"/>
    </location>
</feature>
<feature type="compositionally biased region" description="Polar residues" evidence="2">
    <location>
        <begin position="1"/>
        <end position="28"/>
    </location>
</feature>
<feature type="compositionally biased region" description="Polar residues" evidence="2">
    <location>
        <begin position="36"/>
        <end position="48"/>
    </location>
</feature>
<feature type="compositionally biased region" description="Low complexity" evidence="2">
    <location>
        <begin position="106"/>
        <end position="115"/>
    </location>
</feature>
<name>ZAT2_ARATH</name>
<gene>
    <name evidence="6" type="primary">ZAT2</name>
    <name evidence="5" type="synonym">DAZ1</name>
    <name evidence="7" type="ordered locus">At2g17180</name>
    <name evidence="8" type="ORF">T23A1.4</name>
</gene>
<evidence type="ECO:0000255" key="1">
    <source>
        <dbReference type="PROSITE-ProRule" id="PRU00042"/>
    </source>
</evidence>
<evidence type="ECO:0000256" key="2">
    <source>
        <dbReference type="SAM" id="MobiDB-lite"/>
    </source>
</evidence>
<evidence type="ECO:0000269" key="3">
    <source>
    </source>
</evidence>
<evidence type="ECO:0000269" key="4">
    <source>
    </source>
</evidence>
<evidence type="ECO:0000303" key="5">
    <source>
    </source>
</evidence>
<evidence type="ECO:0000305" key="6"/>
<evidence type="ECO:0000312" key="7">
    <source>
        <dbReference type="Araport" id="AT2G17180"/>
    </source>
</evidence>
<evidence type="ECO:0000312" key="8">
    <source>
        <dbReference type="EMBL" id="AAD25136.1"/>
    </source>
</evidence>
<keyword id="KW-0479">Metal-binding</keyword>
<keyword id="KW-0539">Nucleus</keyword>
<keyword id="KW-1185">Reference proteome</keyword>
<keyword id="KW-0677">Repeat</keyword>
<keyword id="KW-0804">Transcription</keyword>
<keyword id="KW-0805">Transcription regulation</keyword>
<keyword id="KW-0862">Zinc</keyword>
<keyword id="KW-0863">Zinc-finger</keyword>
<dbReference type="EMBL" id="AC007127">
    <property type="protein sequence ID" value="AAD25136.1"/>
    <property type="molecule type" value="Genomic_DNA"/>
</dbReference>
<dbReference type="EMBL" id="CP002685">
    <property type="protein sequence ID" value="AEC06595.1"/>
    <property type="molecule type" value="Genomic_DNA"/>
</dbReference>
<dbReference type="EMBL" id="DQ056533">
    <property type="protein sequence ID" value="AAY78685.1"/>
    <property type="molecule type" value="mRNA"/>
</dbReference>
<dbReference type="EMBL" id="AB493550">
    <property type="protein sequence ID" value="BAH30388.1"/>
    <property type="molecule type" value="Genomic_DNA"/>
</dbReference>
<dbReference type="PIR" id="A84549">
    <property type="entry name" value="A84549"/>
</dbReference>
<dbReference type="RefSeq" id="NP_179309.1">
    <property type="nucleotide sequence ID" value="NM_127272.2"/>
</dbReference>
<dbReference type="BioGRID" id="1580">
    <property type="interactions" value="5"/>
</dbReference>
<dbReference type="IntAct" id="Q9SIJ0">
    <property type="interactions" value="4"/>
</dbReference>
<dbReference type="STRING" id="3702.Q9SIJ0"/>
<dbReference type="PaxDb" id="3702-AT2G17180.1"/>
<dbReference type="ProteomicsDB" id="242961"/>
<dbReference type="EnsemblPlants" id="AT2G17180.1">
    <property type="protein sequence ID" value="AT2G17180.1"/>
    <property type="gene ID" value="AT2G17180"/>
</dbReference>
<dbReference type="GeneID" id="816223"/>
<dbReference type="Gramene" id="AT2G17180.1">
    <property type="protein sequence ID" value="AT2G17180.1"/>
    <property type="gene ID" value="AT2G17180"/>
</dbReference>
<dbReference type="KEGG" id="ath:AT2G17180"/>
<dbReference type="Araport" id="AT2G17180"/>
<dbReference type="TAIR" id="AT2G17180">
    <property type="gene designation" value="DAZ1"/>
</dbReference>
<dbReference type="eggNOG" id="KOG1721">
    <property type="taxonomic scope" value="Eukaryota"/>
</dbReference>
<dbReference type="HOGENOM" id="CLU_059470_0_0_1"/>
<dbReference type="InParanoid" id="Q9SIJ0"/>
<dbReference type="OMA" id="NICYRVY"/>
<dbReference type="PhylomeDB" id="Q9SIJ0"/>
<dbReference type="PRO" id="PR:Q9SIJ0"/>
<dbReference type="Proteomes" id="UP000006548">
    <property type="component" value="Chromosome 2"/>
</dbReference>
<dbReference type="ExpressionAtlas" id="Q9SIJ0">
    <property type="expression patterns" value="baseline and differential"/>
</dbReference>
<dbReference type="GO" id="GO:0005634">
    <property type="term" value="C:nucleus"/>
    <property type="evidence" value="ECO:0007669"/>
    <property type="project" value="UniProtKB-SubCell"/>
</dbReference>
<dbReference type="GO" id="GO:0003700">
    <property type="term" value="F:DNA-binding transcription factor activity"/>
    <property type="evidence" value="ECO:0000250"/>
    <property type="project" value="TAIR"/>
</dbReference>
<dbReference type="GO" id="GO:0008270">
    <property type="term" value="F:zinc ion binding"/>
    <property type="evidence" value="ECO:0007669"/>
    <property type="project" value="UniProtKB-KW"/>
</dbReference>
<dbReference type="GO" id="GO:0048235">
    <property type="term" value="P:pollen sperm cell differentiation"/>
    <property type="evidence" value="ECO:0000270"/>
    <property type="project" value="TAIR"/>
</dbReference>
<dbReference type="GO" id="GO:0006355">
    <property type="term" value="P:regulation of DNA-templated transcription"/>
    <property type="evidence" value="ECO:0000304"/>
    <property type="project" value="TAIR"/>
</dbReference>
<dbReference type="Gene3D" id="3.30.160.60">
    <property type="entry name" value="Classic Zinc Finger"/>
    <property type="match status" value="1"/>
</dbReference>
<dbReference type="InterPro" id="IPR036236">
    <property type="entry name" value="Znf_C2H2_sf"/>
</dbReference>
<dbReference type="InterPro" id="IPR013087">
    <property type="entry name" value="Znf_C2H2_type"/>
</dbReference>
<dbReference type="PANTHER" id="PTHR47591">
    <property type="entry name" value="ZINC FINGER PROTEIN ZAT2-RELATED"/>
    <property type="match status" value="1"/>
</dbReference>
<dbReference type="PANTHER" id="PTHR47591:SF1">
    <property type="entry name" value="ZINC FINGER PROTEIN ZAT2-RELATED"/>
    <property type="match status" value="1"/>
</dbReference>
<dbReference type="Pfam" id="PF13912">
    <property type="entry name" value="zf-C2H2_6"/>
    <property type="match status" value="3"/>
</dbReference>
<dbReference type="SMART" id="SM00355">
    <property type="entry name" value="ZnF_C2H2"/>
    <property type="match status" value="3"/>
</dbReference>
<dbReference type="SUPFAM" id="SSF57667">
    <property type="entry name" value="beta-beta-alpha zinc fingers"/>
    <property type="match status" value="2"/>
</dbReference>
<dbReference type="PROSITE" id="PS00028">
    <property type="entry name" value="ZINC_FINGER_C2H2_1"/>
    <property type="match status" value="3"/>
</dbReference>
<dbReference type="PROSITE" id="PS50157">
    <property type="entry name" value="ZINC_FINGER_C2H2_2"/>
    <property type="match status" value="3"/>
</dbReference>